<comment type="function">
    <text evidence="1">Transfers and isomerizes the ribose moiety from AdoMet to the 7-aminomethyl group of 7-deazaguanine (preQ1-tRNA) to give epoxyqueuosine (oQ-tRNA).</text>
</comment>
<comment type="catalytic activity">
    <reaction evidence="1">
        <text>7-aminomethyl-7-carbaguanosine(34) in tRNA + S-adenosyl-L-methionine = epoxyqueuosine(34) in tRNA + adenine + L-methionine + 2 H(+)</text>
        <dbReference type="Rhea" id="RHEA:32155"/>
        <dbReference type="Rhea" id="RHEA-COMP:10342"/>
        <dbReference type="Rhea" id="RHEA-COMP:18582"/>
        <dbReference type="ChEBI" id="CHEBI:15378"/>
        <dbReference type="ChEBI" id="CHEBI:16708"/>
        <dbReference type="ChEBI" id="CHEBI:57844"/>
        <dbReference type="ChEBI" id="CHEBI:59789"/>
        <dbReference type="ChEBI" id="CHEBI:82833"/>
        <dbReference type="ChEBI" id="CHEBI:194443"/>
        <dbReference type="EC" id="2.4.99.17"/>
    </reaction>
</comment>
<comment type="pathway">
    <text evidence="1">tRNA modification; tRNA-queuosine biosynthesis.</text>
</comment>
<comment type="subunit">
    <text evidence="1">Monomer.</text>
</comment>
<comment type="subcellular location">
    <subcellularLocation>
        <location evidence="1">Cytoplasm</location>
    </subcellularLocation>
</comment>
<comment type="similarity">
    <text evidence="1">Belongs to the QueA family.</text>
</comment>
<accession>A0RPZ6</accession>
<reference key="1">
    <citation type="submission" date="2006-11" db="EMBL/GenBank/DDBJ databases">
        <title>Sequence of Campylobacter fetus subsp. fetus 82-40.</title>
        <authorList>
            <person name="Fouts D.E."/>
            <person name="Nelson K.E."/>
        </authorList>
    </citation>
    <scope>NUCLEOTIDE SEQUENCE [LARGE SCALE GENOMIC DNA]</scope>
    <source>
        <strain>82-40</strain>
    </source>
</reference>
<proteinExistence type="inferred from homology"/>
<evidence type="ECO:0000255" key="1">
    <source>
        <dbReference type="HAMAP-Rule" id="MF_00113"/>
    </source>
</evidence>
<feature type="chain" id="PRO_1000117528" description="S-adenosylmethionine:tRNA ribosyltransferase-isomerase">
    <location>
        <begin position="1"/>
        <end position="339"/>
    </location>
</feature>
<keyword id="KW-0963">Cytoplasm</keyword>
<keyword id="KW-0671">Queuosine biosynthesis</keyword>
<keyword id="KW-0949">S-adenosyl-L-methionine</keyword>
<keyword id="KW-0808">Transferase</keyword>
<dbReference type="EC" id="2.4.99.17" evidence="1"/>
<dbReference type="EMBL" id="CP000487">
    <property type="protein sequence ID" value="ABK82884.1"/>
    <property type="molecule type" value="Genomic_DNA"/>
</dbReference>
<dbReference type="RefSeq" id="WP_002849734.1">
    <property type="nucleotide sequence ID" value="NC_008599.1"/>
</dbReference>
<dbReference type="SMR" id="A0RPZ6"/>
<dbReference type="GeneID" id="61064946"/>
<dbReference type="KEGG" id="cff:CFF8240_1121"/>
<dbReference type="eggNOG" id="COG0809">
    <property type="taxonomic scope" value="Bacteria"/>
</dbReference>
<dbReference type="HOGENOM" id="CLU_039110_1_0_7"/>
<dbReference type="UniPathway" id="UPA00392"/>
<dbReference type="Proteomes" id="UP000000760">
    <property type="component" value="Chromosome"/>
</dbReference>
<dbReference type="GO" id="GO:0005737">
    <property type="term" value="C:cytoplasm"/>
    <property type="evidence" value="ECO:0007669"/>
    <property type="project" value="UniProtKB-SubCell"/>
</dbReference>
<dbReference type="GO" id="GO:0051075">
    <property type="term" value="F:S-adenosylmethionine:tRNA ribosyltransferase-isomerase activity"/>
    <property type="evidence" value="ECO:0007669"/>
    <property type="project" value="UniProtKB-EC"/>
</dbReference>
<dbReference type="GO" id="GO:0008616">
    <property type="term" value="P:queuosine biosynthetic process"/>
    <property type="evidence" value="ECO:0007669"/>
    <property type="project" value="UniProtKB-UniRule"/>
</dbReference>
<dbReference type="GO" id="GO:0002099">
    <property type="term" value="P:tRNA wobble guanine modification"/>
    <property type="evidence" value="ECO:0007669"/>
    <property type="project" value="TreeGrafter"/>
</dbReference>
<dbReference type="Gene3D" id="2.40.10.240">
    <property type="entry name" value="QueA-like"/>
    <property type="match status" value="1"/>
</dbReference>
<dbReference type="Gene3D" id="3.40.1780.10">
    <property type="entry name" value="QueA-like"/>
    <property type="match status" value="1"/>
</dbReference>
<dbReference type="HAMAP" id="MF_00113">
    <property type="entry name" value="QueA"/>
    <property type="match status" value="1"/>
</dbReference>
<dbReference type="InterPro" id="IPR003699">
    <property type="entry name" value="QueA"/>
</dbReference>
<dbReference type="InterPro" id="IPR042118">
    <property type="entry name" value="QueA_dom1"/>
</dbReference>
<dbReference type="InterPro" id="IPR042119">
    <property type="entry name" value="QueA_dom2"/>
</dbReference>
<dbReference type="InterPro" id="IPR036100">
    <property type="entry name" value="QueA_sf"/>
</dbReference>
<dbReference type="NCBIfam" id="NF001140">
    <property type="entry name" value="PRK00147.1"/>
    <property type="match status" value="1"/>
</dbReference>
<dbReference type="NCBIfam" id="TIGR00113">
    <property type="entry name" value="queA"/>
    <property type="match status" value="1"/>
</dbReference>
<dbReference type="PANTHER" id="PTHR30307">
    <property type="entry name" value="S-ADENOSYLMETHIONINE:TRNA RIBOSYLTRANSFERASE-ISOMERASE"/>
    <property type="match status" value="1"/>
</dbReference>
<dbReference type="PANTHER" id="PTHR30307:SF0">
    <property type="entry name" value="S-ADENOSYLMETHIONINE:TRNA RIBOSYLTRANSFERASE-ISOMERASE"/>
    <property type="match status" value="1"/>
</dbReference>
<dbReference type="Pfam" id="PF02547">
    <property type="entry name" value="Queuosine_synth"/>
    <property type="match status" value="1"/>
</dbReference>
<dbReference type="SUPFAM" id="SSF111337">
    <property type="entry name" value="QueA-like"/>
    <property type="match status" value="1"/>
</dbReference>
<protein>
    <recommendedName>
        <fullName evidence="1">S-adenosylmethionine:tRNA ribosyltransferase-isomerase</fullName>
        <ecNumber evidence="1">2.4.99.17</ecNumber>
    </recommendedName>
    <alternativeName>
        <fullName evidence="1">Queuosine biosynthesis protein QueA</fullName>
    </alternativeName>
</protein>
<gene>
    <name evidence="1" type="primary">queA</name>
    <name type="ordered locus">CFF8240_1121</name>
</gene>
<sequence length="339" mass="38970">MSDIFSLSSYDYKLPQDLIATAPTMPKEEARLLVYDRQKDSVFHLKFKNLSEILPECAIIFNDTKVIKARIYGRKDSGAEIQMLLNQPLQNSLFSCYIRGKVKVGTKLKFDLGVEAEVLELKDDSSRIVKFKKNEQILNTSEIYNILSHIGHVPLPPYIKREDTPDDEIWYQSIFAKNEGAVAAPTASLHFNDQMLDDLNKTHDISYITLHVGAGTFKGVEHCDIREHKMHSEFYCISKKAKNIIDSDIKLLGVGTTVTRCIEYYYRTKQPKGFCDLFLHPDNKPLRQDFLLTNFHLPKSTLIMLVASFIGLEKTMEIYKQAVENRYKFYSYGDGMLII</sequence>
<organism>
    <name type="scientific">Campylobacter fetus subsp. fetus (strain 82-40)</name>
    <dbReference type="NCBI Taxonomy" id="360106"/>
    <lineage>
        <taxon>Bacteria</taxon>
        <taxon>Pseudomonadati</taxon>
        <taxon>Campylobacterota</taxon>
        <taxon>Epsilonproteobacteria</taxon>
        <taxon>Campylobacterales</taxon>
        <taxon>Campylobacteraceae</taxon>
        <taxon>Campylobacter</taxon>
    </lineage>
</organism>
<name>QUEA_CAMFF</name>